<dbReference type="EC" id="1.8.4.11" evidence="1"/>
<dbReference type="EMBL" id="CP000867">
    <property type="protein sequence ID" value="ABX02620.1"/>
    <property type="molecule type" value="Genomic_DNA"/>
</dbReference>
<dbReference type="SMR" id="A9AB97"/>
<dbReference type="STRING" id="444158.MmarC6_1809"/>
<dbReference type="KEGG" id="mmx:MmarC6_1809"/>
<dbReference type="eggNOG" id="arCOG02816">
    <property type="taxonomic scope" value="Archaea"/>
</dbReference>
<dbReference type="HOGENOM" id="CLU_031040_10_2_2"/>
<dbReference type="OrthoDB" id="7150at2157"/>
<dbReference type="PhylomeDB" id="A9AB97"/>
<dbReference type="GO" id="GO:0005737">
    <property type="term" value="C:cytoplasm"/>
    <property type="evidence" value="ECO:0007669"/>
    <property type="project" value="TreeGrafter"/>
</dbReference>
<dbReference type="GO" id="GO:0036456">
    <property type="term" value="F:L-methionine-(S)-S-oxide reductase activity"/>
    <property type="evidence" value="ECO:0007669"/>
    <property type="project" value="TreeGrafter"/>
</dbReference>
<dbReference type="GO" id="GO:0008113">
    <property type="term" value="F:peptide-methionine (S)-S-oxide reductase activity"/>
    <property type="evidence" value="ECO:0007669"/>
    <property type="project" value="UniProtKB-UniRule"/>
</dbReference>
<dbReference type="GO" id="GO:0034599">
    <property type="term" value="P:cellular response to oxidative stress"/>
    <property type="evidence" value="ECO:0007669"/>
    <property type="project" value="TreeGrafter"/>
</dbReference>
<dbReference type="GO" id="GO:0036211">
    <property type="term" value="P:protein modification process"/>
    <property type="evidence" value="ECO:0007669"/>
    <property type="project" value="UniProtKB-UniRule"/>
</dbReference>
<dbReference type="Gene3D" id="3.30.1060.10">
    <property type="entry name" value="Peptide methionine sulphoxide reductase MsrA"/>
    <property type="match status" value="1"/>
</dbReference>
<dbReference type="HAMAP" id="MF_01401">
    <property type="entry name" value="MsrA"/>
    <property type="match status" value="1"/>
</dbReference>
<dbReference type="InterPro" id="IPR002569">
    <property type="entry name" value="Met_Sox_Rdtase_MsrA_dom"/>
</dbReference>
<dbReference type="InterPro" id="IPR036509">
    <property type="entry name" value="Met_Sox_Rdtase_MsrA_sf"/>
</dbReference>
<dbReference type="InterPro" id="IPR050162">
    <property type="entry name" value="MsrA_MetSO_reductase"/>
</dbReference>
<dbReference type="NCBIfam" id="TIGR00401">
    <property type="entry name" value="msrA"/>
    <property type="match status" value="1"/>
</dbReference>
<dbReference type="PANTHER" id="PTHR42799">
    <property type="entry name" value="MITOCHONDRIAL PEPTIDE METHIONINE SULFOXIDE REDUCTASE"/>
    <property type="match status" value="1"/>
</dbReference>
<dbReference type="PANTHER" id="PTHR42799:SF2">
    <property type="entry name" value="MITOCHONDRIAL PEPTIDE METHIONINE SULFOXIDE REDUCTASE"/>
    <property type="match status" value="1"/>
</dbReference>
<dbReference type="Pfam" id="PF01625">
    <property type="entry name" value="PMSR"/>
    <property type="match status" value="1"/>
</dbReference>
<dbReference type="SUPFAM" id="SSF55068">
    <property type="entry name" value="Peptide methionine sulfoxide reductase"/>
    <property type="match status" value="1"/>
</dbReference>
<keyword id="KW-0560">Oxidoreductase</keyword>
<name>MSRA_METM6</name>
<sequence length="157" mass="18266">MTNTETAVFGMGCFWSAEELFRKINGVISTEVGFMGGNIKNPTYGQVCRGRSGHIEVVNIIYNPKILKYDDLLELFWNNHDPTTPNRQGWDVGEQYSSHIFYFTEEQKLLAEKSFEKIQKNSELKIVTAIRKASDFFPAEEYHQKYFMKKNNCILNF</sequence>
<protein>
    <recommendedName>
        <fullName evidence="1">Peptide methionine sulfoxide reductase MsrA</fullName>
        <shortName evidence="1">Protein-methionine-S-oxide reductase</shortName>
        <ecNumber evidence="1">1.8.4.11</ecNumber>
    </recommendedName>
    <alternativeName>
        <fullName evidence="1">Peptide-methionine (S)-S-oxide reductase</fullName>
        <shortName evidence="1">Peptide Met(O) reductase</shortName>
    </alternativeName>
</protein>
<evidence type="ECO:0000255" key="1">
    <source>
        <dbReference type="HAMAP-Rule" id="MF_01401"/>
    </source>
</evidence>
<organism>
    <name type="scientific">Methanococcus maripaludis (strain C6 / ATCC BAA-1332)</name>
    <dbReference type="NCBI Taxonomy" id="444158"/>
    <lineage>
        <taxon>Archaea</taxon>
        <taxon>Methanobacteriati</taxon>
        <taxon>Methanobacteriota</taxon>
        <taxon>Methanomada group</taxon>
        <taxon>Methanococci</taxon>
        <taxon>Methanococcales</taxon>
        <taxon>Methanococcaceae</taxon>
        <taxon>Methanococcus</taxon>
    </lineage>
</organism>
<accession>A9AB97</accession>
<reference key="1">
    <citation type="submission" date="2007-10" db="EMBL/GenBank/DDBJ databases">
        <title>Complete sequence of Methanococcus maripaludis C6.</title>
        <authorList>
            <consortium name="US DOE Joint Genome Institute"/>
            <person name="Copeland A."/>
            <person name="Lucas S."/>
            <person name="Lapidus A."/>
            <person name="Barry K."/>
            <person name="Glavina del Rio T."/>
            <person name="Dalin E."/>
            <person name="Tice H."/>
            <person name="Pitluck S."/>
            <person name="Clum A."/>
            <person name="Schmutz J."/>
            <person name="Larimer F."/>
            <person name="Land M."/>
            <person name="Hauser L."/>
            <person name="Kyrpides N."/>
            <person name="Mikhailova N."/>
            <person name="Sieprawska-Lupa M."/>
            <person name="Whitman W.B."/>
            <person name="Richardson P."/>
        </authorList>
    </citation>
    <scope>NUCLEOTIDE SEQUENCE [LARGE SCALE GENOMIC DNA]</scope>
    <source>
        <strain>C6 / ATCC BAA-1332</strain>
    </source>
</reference>
<gene>
    <name evidence="1" type="primary">msrA</name>
    <name type="ordered locus">MmarC6_1809</name>
</gene>
<comment type="function">
    <text evidence="1">Has an important function as a repair enzyme for proteins that have been inactivated by oxidation. Catalyzes the reversible oxidation-reduction of methionine sulfoxide in proteins to methionine.</text>
</comment>
<comment type="catalytic activity">
    <reaction evidence="1">
        <text>L-methionyl-[protein] + [thioredoxin]-disulfide + H2O = L-methionyl-(S)-S-oxide-[protein] + [thioredoxin]-dithiol</text>
        <dbReference type="Rhea" id="RHEA:14217"/>
        <dbReference type="Rhea" id="RHEA-COMP:10698"/>
        <dbReference type="Rhea" id="RHEA-COMP:10700"/>
        <dbReference type="Rhea" id="RHEA-COMP:12313"/>
        <dbReference type="Rhea" id="RHEA-COMP:12315"/>
        <dbReference type="ChEBI" id="CHEBI:15377"/>
        <dbReference type="ChEBI" id="CHEBI:16044"/>
        <dbReference type="ChEBI" id="CHEBI:29950"/>
        <dbReference type="ChEBI" id="CHEBI:44120"/>
        <dbReference type="ChEBI" id="CHEBI:50058"/>
        <dbReference type="EC" id="1.8.4.11"/>
    </reaction>
</comment>
<comment type="catalytic activity">
    <reaction evidence="1">
        <text>[thioredoxin]-disulfide + L-methionine + H2O = L-methionine (S)-S-oxide + [thioredoxin]-dithiol</text>
        <dbReference type="Rhea" id="RHEA:19993"/>
        <dbReference type="Rhea" id="RHEA-COMP:10698"/>
        <dbReference type="Rhea" id="RHEA-COMP:10700"/>
        <dbReference type="ChEBI" id="CHEBI:15377"/>
        <dbReference type="ChEBI" id="CHEBI:29950"/>
        <dbReference type="ChEBI" id="CHEBI:50058"/>
        <dbReference type="ChEBI" id="CHEBI:57844"/>
        <dbReference type="ChEBI" id="CHEBI:58772"/>
        <dbReference type="EC" id="1.8.4.11"/>
    </reaction>
</comment>
<comment type="similarity">
    <text evidence="1">Belongs to the MsrA Met sulfoxide reductase family.</text>
</comment>
<feature type="chain" id="PRO_1000145414" description="Peptide methionine sulfoxide reductase MsrA">
    <location>
        <begin position="1"/>
        <end position="157"/>
    </location>
</feature>
<feature type="active site" evidence="1">
    <location>
        <position position="13"/>
    </location>
</feature>
<proteinExistence type="inferred from homology"/>